<organism>
    <name type="scientific">Mus musculus</name>
    <name type="common">Mouse</name>
    <dbReference type="NCBI Taxonomy" id="10090"/>
    <lineage>
        <taxon>Eukaryota</taxon>
        <taxon>Metazoa</taxon>
        <taxon>Chordata</taxon>
        <taxon>Craniata</taxon>
        <taxon>Vertebrata</taxon>
        <taxon>Euteleostomi</taxon>
        <taxon>Mammalia</taxon>
        <taxon>Eutheria</taxon>
        <taxon>Euarchontoglires</taxon>
        <taxon>Glires</taxon>
        <taxon>Rodentia</taxon>
        <taxon>Myomorpha</taxon>
        <taxon>Muroidea</taxon>
        <taxon>Muridae</taxon>
        <taxon>Murinae</taxon>
        <taxon>Mus</taxon>
        <taxon>Mus</taxon>
    </lineage>
</organism>
<gene>
    <name type="primary">Tspan14</name>
    <name type="synonym">D14Ertd226e</name>
    <name type="synonym">Tm4sf14</name>
</gene>
<evidence type="ECO:0000250" key="1">
    <source>
        <dbReference type="UniProtKB" id="O95858"/>
    </source>
</evidence>
<evidence type="ECO:0000250" key="2">
    <source>
        <dbReference type="UniProtKB" id="Q8NG11"/>
    </source>
</evidence>
<evidence type="ECO:0000255" key="3"/>
<evidence type="ECO:0000269" key="4">
    <source>
    </source>
</evidence>
<evidence type="ECO:0000269" key="5">
    <source>
    </source>
</evidence>
<evidence type="ECO:0000305" key="6"/>
<reference key="1">
    <citation type="journal article" date="2005" name="Science">
        <title>The transcriptional landscape of the mammalian genome.</title>
        <authorList>
            <person name="Carninci P."/>
            <person name="Kasukawa T."/>
            <person name="Katayama S."/>
            <person name="Gough J."/>
            <person name="Frith M.C."/>
            <person name="Maeda N."/>
            <person name="Oyama R."/>
            <person name="Ravasi T."/>
            <person name="Lenhard B."/>
            <person name="Wells C."/>
            <person name="Kodzius R."/>
            <person name="Shimokawa K."/>
            <person name="Bajic V.B."/>
            <person name="Brenner S.E."/>
            <person name="Batalov S."/>
            <person name="Forrest A.R."/>
            <person name="Zavolan M."/>
            <person name="Davis M.J."/>
            <person name="Wilming L.G."/>
            <person name="Aidinis V."/>
            <person name="Allen J.E."/>
            <person name="Ambesi-Impiombato A."/>
            <person name="Apweiler R."/>
            <person name="Aturaliya R.N."/>
            <person name="Bailey T.L."/>
            <person name="Bansal M."/>
            <person name="Baxter L."/>
            <person name="Beisel K.W."/>
            <person name="Bersano T."/>
            <person name="Bono H."/>
            <person name="Chalk A.M."/>
            <person name="Chiu K.P."/>
            <person name="Choudhary V."/>
            <person name="Christoffels A."/>
            <person name="Clutterbuck D.R."/>
            <person name="Crowe M.L."/>
            <person name="Dalla E."/>
            <person name="Dalrymple B.P."/>
            <person name="de Bono B."/>
            <person name="Della Gatta G."/>
            <person name="di Bernardo D."/>
            <person name="Down T."/>
            <person name="Engstrom P."/>
            <person name="Fagiolini M."/>
            <person name="Faulkner G."/>
            <person name="Fletcher C.F."/>
            <person name="Fukushima T."/>
            <person name="Furuno M."/>
            <person name="Futaki S."/>
            <person name="Gariboldi M."/>
            <person name="Georgii-Hemming P."/>
            <person name="Gingeras T.R."/>
            <person name="Gojobori T."/>
            <person name="Green R.E."/>
            <person name="Gustincich S."/>
            <person name="Harbers M."/>
            <person name="Hayashi Y."/>
            <person name="Hensch T.K."/>
            <person name="Hirokawa N."/>
            <person name="Hill D."/>
            <person name="Huminiecki L."/>
            <person name="Iacono M."/>
            <person name="Ikeo K."/>
            <person name="Iwama A."/>
            <person name="Ishikawa T."/>
            <person name="Jakt M."/>
            <person name="Kanapin A."/>
            <person name="Katoh M."/>
            <person name="Kawasawa Y."/>
            <person name="Kelso J."/>
            <person name="Kitamura H."/>
            <person name="Kitano H."/>
            <person name="Kollias G."/>
            <person name="Krishnan S.P."/>
            <person name="Kruger A."/>
            <person name="Kummerfeld S.K."/>
            <person name="Kurochkin I.V."/>
            <person name="Lareau L.F."/>
            <person name="Lazarevic D."/>
            <person name="Lipovich L."/>
            <person name="Liu J."/>
            <person name="Liuni S."/>
            <person name="McWilliam S."/>
            <person name="Madan Babu M."/>
            <person name="Madera M."/>
            <person name="Marchionni L."/>
            <person name="Matsuda H."/>
            <person name="Matsuzawa S."/>
            <person name="Miki H."/>
            <person name="Mignone F."/>
            <person name="Miyake S."/>
            <person name="Morris K."/>
            <person name="Mottagui-Tabar S."/>
            <person name="Mulder N."/>
            <person name="Nakano N."/>
            <person name="Nakauchi H."/>
            <person name="Ng P."/>
            <person name="Nilsson R."/>
            <person name="Nishiguchi S."/>
            <person name="Nishikawa S."/>
            <person name="Nori F."/>
            <person name="Ohara O."/>
            <person name="Okazaki Y."/>
            <person name="Orlando V."/>
            <person name="Pang K.C."/>
            <person name="Pavan W.J."/>
            <person name="Pavesi G."/>
            <person name="Pesole G."/>
            <person name="Petrovsky N."/>
            <person name="Piazza S."/>
            <person name="Reed J."/>
            <person name="Reid J.F."/>
            <person name="Ring B.Z."/>
            <person name="Ringwald M."/>
            <person name="Rost B."/>
            <person name="Ruan Y."/>
            <person name="Salzberg S.L."/>
            <person name="Sandelin A."/>
            <person name="Schneider C."/>
            <person name="Schoenbach C."/>
            <person name="Sekiguchi K."/>
            <person name="Semple C.A."/>
            <person name="Seno S."/>
            <person name="Sessa L."/>
            <person name="Sheng Y."/>
            <person name="Shibata Y."/>
            <person name="Shimada H."/>
            <person name="Shimada K."/>
            <person name="Silva D."/>
            <person name="Sinclair B."/>
            <person name="Sperling S."/>
            <person name="Stupka E."/>
            <person name="Sugiura K."/>
            <person name="Sultana R."/>
            <person name="Takenaka Y."/>
            <person name="Taki K."/>
            <person name="Tammoja K."/>
            <person name="Tan S.L."/>
            <person name="Tang S."/>
            <person name="Taylor M.S."/>
            <person name="Tegner J."/>
            <person name="Teichmann S.A."/>
            <person name="Ueda H.R."/>
            <person name="van Nimwegen E."/>
            <person name="Verardo R."/>
            <person name="Wei C.L."/>
            <person name="Yagi K."/>
            <person name="Yamanishi H."/>
            <person name="Zabarovsky E."/>
            <person name="Zhu S."/>
            <person name="Zimmer A."/>
            <person name="Hide W."/>
            <person name="Bult C."/>
            <person name="Grimmond S.M."/>
            <person name="Teasdale R.D."/>
            <person name="Liu E.T."/>
            <person name="Brusic V."/>
            <person name="Quackenbush J."/>
            <person name="Wahlestedt C."/>
            <person name="Mattick J.S."/>
            <person name="Hume D.A."/>
            <person name="Kai C."/>
            <person name="Sasaki D."/>
            <person name="Tomaru Y."/>
            <person name="Fukuda S."/>
            <person name="Kanamori-Katayama M."/>
            <person name="Suzuki M."/>
            <person name="Aoki J."/>
            <person name="Arakawa T."/>
            <person name="Iida J."/>
            <person name="Imamura K."/>
            <person name="Itoh M."/>
            <person name="Kato T."/>
            <person name="Kawaji H."/>
            <person name="Kawagashira N."/>
            <person name="Kawashima T."/>
            <person name="Kojima M."/>
            <person name="Kondo S."/>
            <person name="Konno H."/>
            <person name="Nakano K."/>
            <person name="Ninomiya N."/>
            <person name="Nishio T."/>
            <person name="Okada M."/>
            <person name="Plessy C."/>
            <person name="Shibata K."/>
            <person name="Shiraki T."/>
            <person name="Suzuki S."/>
            <person name="Tagami M."/>
            <person name="Waki K."/>
            <person name="Watahiki A."/>
            <person name="Okamura-Oho Y."/>
            <person name="Suzuki H."/>
            <person name="Kawai J."/>
            <person name="Hayashizaki Y."/>
        </authorList>
    </citation>
    <scope>NUCLEOTIDE SEQUENCE [LARGE SCALE MRNA]</scope>
    <source>
        <strain>C57BL/6J</strain>
        <tissue>Pituitary</tissue>
    </source>
</reference>
<reference key="2">
    <citation type="journal article" date="2004" name="Genome Res.">
        <title>The status, quality, and expansion of the NIH full-length cDNA project: the Mammalian Gene Collection (MGC).</title>
        <authorList>
            <consortium name="The MGC Project Team"/>
        </authorList>
    </citation>
    <scope>NUCLEOTIDE SEQUENCE [LARGE SCALE MRNA]</scope>
    <source>
        <strain>FVB/N</strain>
        <tissue>Mammary tumor</tissue>
    </source>
</reference>
<reference key="3">
    <citation type="submission" date="2009-01" db="UniProtKB">
        <authorList>
            <person name="Lubec G."/>
            <person name="Sunyer B."/>
            <person name="Chen W.-Q."/>
        </authorList>
    </citation>
    <scope>PROTEIN SEQUENCE OF 6-16</scope>
    <scope>IDENTIFICATION BY MASS SPECTROMETRY</scope>
    <source>
        <strain>OF1</strain>
        <tissue>Hippocampus</tissue>
    </source>
</reference>
<reference key="4">
    <citation type="journal article" date="2010" name="Cell">
        <title>A tissue-specific atlas of mouse protein phosphorylation and expression.</title>
        <authorList>
            <person name="Huttlin E.L."/>
            <person name="Jedrychowski M.P."/>
            <person name="Elias J.E."/>
            <person name="Goswami T."/>
            <person name="Rad R."/>
            <person name="Beausoleil S.A."/>
            <person name="Villen J."/>
            <person name="Haas W."/>
            <person name="Sowa M.E."/>
            <person name="Gygi S.P."/>
        </authorList>
    </citation>
    <scope>IDENTIFICATION BY MASS SPECTROMETRY [LARGE SCALE ANALYSIS]</scope>
    <source>
        <tissue>Brain</tissue>
        <tissue>Heart</tissue>
        <tissue>Kidney</tissue>
        <tissue>Lung</tissue>
    </source>
</reference>
<reference key="5">
    <citation type="journal article" date="2012" name="J. Biol. Chem.">
        <title>The TspanC8 subgroup of tetraspanins interacts with A disintegrin and metalloprotease 10 (ADAM10) and regulates its maturation and cell surface expression.</title>
        <authorList>
            <person name="Haining E.J."/>
            <person name="Yang J."/>
            <person name="Bailey R.L."/>
            <person name="Khan K."/>
            <person name="Collier R."/>
            <person name="Tsai S."/>
            <person name="Watson S.P."/>
            <person name="Frampton J."/>
            <person name="Garcia P."/>
            <person name="Tomlinson M.G."/>
        </authorList>
    </citation>
    <scope>FUNCTION</scope>
    <scope>INTERACTION WITH ADAM10</scope>
</reference>
<reference key="6">
    <citation type="journal article" date="2016" name="J. Biol. Chem.">
        <title>TspanC8 tetraspanins and A disintegrin and metalloprotease 10 (ADAM10) interact via their extracellular regions: evidence for distinct binding mechanisms for different TspanC8 proteins.</title>
        <authorList>
            <person name="Noy P.J."/>
            <person name="Yang J."/>
            <person name="Reyat J.S."/>
            <person name="Matthews A.L."/>
            <person name="Charlton A.E."/>
            <person name="Furmston J."/>
            <person name="Rogers D.A."/>
            <person name="Rainger G.E."/>
            <person name="Tomlinson M.G."/>
        </authorList>
    </citation>
    <scope>FUNCTION</scope>
    <scope>INTERACTION WITH ADAM10</scope>
</reference>
<name>TSN14_MOUSE</name>
<comment type="function">
    <text evidence="4 5">Part of TspanC8 subgroup, composed of 6 members that interact with the transmembrane metalloprotease ADAM10. This interaction is required for ADAM10 exit from the endoplasmic reticulum and for enzymatic maturation and trafficking to the cell surface as well as substrate specificity. Different TspanC8/ADAM10 complexes have distinct substrates (PubMed:23035126, PubMed:26668317). Negatively regulates ADAM10-mediated cleavage of GP6 (PubMed:26668317). Promotes ADAM10-mediated cleavage of CDH5 (PubMed:23035126).</text>
</comment>
<comment type="subunit">
    <text evidence="4 5">Interacts with ADAM10; the interaction promotes ADAM10 maturation and cell surface expression.</text>
</comment>
<comment type="subcellular location">
    <subcellularLocation>
        <location evidence="2">Cell membrane</location>
        <topology evidence="6">Multi-pass membrane protein</topology>
    </subcellularLocation>
</comment>
<comment type="similarity">
    <text evidence="6">Belongs to the tetraspanin (TM4SF) family.</text>
</comment>
<keyword id="KW-1003">Cell membrane</keyword>
<keyword id="KW-0903">Direct protein sequencing</keyword>
<keyword id="KW-1015">Disulfide bond</keyword>
<keyword id="KW-0325">Glycoprotein</keyword>
<keyword id="KW-0472">Membrane</keyword>
<keyword id="KW-1185">Reference proteome</keyword>
<keyword id="KW-0812">Transmembrane</keyword>
<keyword id="KW-1133">Transmembrane helix</keyword>
<proteinExistence type="evidence at protein level"/>
<accession>Q8QZY6</accession>
<protein>
    <recommendedName>
        <fullName>Tetraspanin-14</fullName>
        <shortName>Tspan-14</shortName>
    </recommendedName>
    <alternativeName>
        <fullName>Transmembrane 4 superfamily member 14</fullName>
    </alternativeName>
</protein>
<feature type="chain" id="PRO_0000219262" description="Tetraspanin-14">
    <location>
        <begin position="1"/>
        <end position="270"/>
    </location>
</feature>
<feature type="topological domain" description="Cytoplasmic" evidence="6">
    <location>
        <begin position="1"/>
        <end position="17"/>
    </location>
</feature>
<feature type="transmembrane region" description="Helical" evidence="3">
    <location>
        <begin position="18"/>
        <end position="38"/>
    </location>
</feature>
<feature type="topological domain" description="Extracellular" evidence="6">
    <location>
        <begin position="39"/>
        <end position="61"/>
    </location>
</feature>
<feature type="transmembrane region" description="Helical" evidence="3">
    <location>
        <begin position="62"/>
        <end position="82"/>
    </location>
</feature>
<feature type="topological domain" description="Cytoplasmic" evidence="6">
    <location>
        <begin position="83"/>
        <end position="92"/>
    </location>
</feature>
<feature type="transmembrane region" description="Helical" evidence="3">
    <location>
        <begin position="93"/>
        <end position="113"/>
    </location>
</feature>
<feature type="topological domain" description="Extracellular" evidence="6">
    <location>
        <begin position="114"/>
        <end position="232"/>
    </location>
</feature>
<feature type="transmembrane region" description="Helical" evidence="3">
    <location>
        <begin position="233"/>
        <end position="253"/>
    </location>
</feature>
<feature type="topological domain" description="Cytoplasmic" evidence="6">
    <location>
        <begin position="254"/>
        <end position="270"/>
    </location>
</feature>
<feature type="region of interest" description="Necessary and sufficient for interaction with ADAM10" evidence="2">
    <location>
        <begin position="114"/>
        <end position="232"/>
    </location>
</feature>
<feature type="glycosylation site" description="N-linked (GlcNAc...) asparagine" evidence="3">
    <location>
        <position position="169"/>
    </location>
</feature>
<feature type="disulfide bond" evidence="1">
    <location>
        <begin position="153"/>
        <end position="221"/>
    </location>
</feature>
<feature type="disulfide bond" evidence="1">
    <location>
        <begin position="154"/>
        <end position="186"/>
    </location>
</feature>
<feature type="disulfide bond" evidence="1">
    <location>
        <begin position="170"/>
        <end position="180"/>
    </location>
</feature>
<feature type="disulfide bond" evidence="1">
    <location>
        <begin position="187"/>
        <end position="200"/>
    </location>
</feature>
<dbReference type="EMBL" id="AK030593">
    <property type="protein sequence ID" value="BAC27035.1"/>
    <property type="molecule type" value="mRNA"/>
</dbReference>
<dbReference type="EMBL" id="BC024611">
    <property type="protein sequence ID" value="AAH24611.1"/>
    <property type="molecule type" value="mRNA"/>
</dbReference>
<dbReference type="EMBL" id="BC025568">
    <property type="protein sequence ID" value="AAH25568.1"/>
    <property type="molecule type" value="mRNA"/>
</dbReference>
<dbReference type="EMBL" id="BC026574">
    <property type="protein sequence ID" value="AAH26574.1"/>
    <property type="molecule type" value="mRNA"/>
</dbReference>
<dbReference type="CCDS" id="CCDS26956.1"/>
<dbReference type="RefSeq" id="NP_001303677.1">
    <property type="nucleotide sequence ID" value="NM_001316748.1"/>
</dbReference>
<dbReference type="RefSeq" id="NP_666040.1">
    <property type="nucleotide sequence ID" value="NM_145928.3"/>
</dbReference>
<dbReference type="RefSeq" id="XP_006519324.1">
    <property type="nucleotide sequence ID" value="XM_006519261.2"/>
</dbReference>
<dbReference type="RefSeq" id="XP_036014646.1">
    <property type="nucleotide sequence ID" value="XM_036158753.1"/>
</dbReference>
<dbReference type="RefSeq" id="XP_036014648.1">
    <property type="nucleotide sequence ID" value="XM_036158755.1"/>
</dbReference>
<dbReference type="SMR" id="Q8QZY6"/>
<dbReference type="BioGRID" id="206678">
    <property type="interactions" value="1"/>
</dbReference>
<dbReference type="FunCoup" id="Q8QZY6">
    <property type="interactions" value="571"/>
</dbReference>
<dbReference type="IntAct" id="Q8QZY6">
    <property type="interactions" value="1"/>
</dbReference>
<dbReference type="MINT" id="Q8QZY6"/>
<dbReference type="STRING" id="10090.ENSMUSP00000153208"/>
<dbReference type="GlyCosmos" id="Q8QZY6">
    <property type="glycosylation" value="1 site, No reported glycans"/>
</dbReference>
<dbReference type="GlyGen" id="Q8QZY6">
    <property type="glycosylation" value="1 site"/>
</dbReference>
<dbReference type="iPTMnet" id="Q8QZY6"/>
<dbReference type="PhosphoSitePlus" id="Q8QZY6"/>
<dbReference type="SwissPalm" id="Q8QZY6"/>
<dbReference type="jPOST" id="Q8QZY6"/>
<dbReference type="PaxDb" id="10090-ENSMUSP00000035263"/>
<dbReference type="PeptideAtlas" id="Q8QZY6"/>
<dbReference type="ProteomicsDB" id="298147"/>
<dbReference type="Pumba" id="Q8QZY6"/>
<dbReference type="Antibodypedia" id="3113">
    <property type="antibodies" value="55 antibodies from 20 providers"/>
</dbReference>
<dbReference type="DNASU" id="52588"/>
<dbReference type="Ensembl" id="ENSMUST00000047652.6">
    <property type="protein sequence ID" value="ENSMUSP00000035263.6"/>
    <property type="gene ID" value="ENSMUSG00000037824.7"/>
</dbReference>
<dbReference type="Ensembl" id="ENSMUST00000224209.2">
    <property type="protein sequence ID" value="ENSMUSP00000153208.2"/>
    <property type="gene ID" value="ENSMUSG00000037824.7"/>
</dbReference>
<dbReference type="GeneID" id="52588"/>
<dbReference type="KEGG" id="mmu:52588"/>
<dbReference type="UCSC" id="uc007tcg.1">
    <property type="organism name" value="mouse"/>
</dbReference>
<dbReference type="AGR" id="MGI:1196325"/>
<dbReference type="CTD" id="81619"/>
<dbReference type="MGI" id="MGI:1196325">
    <property type="gene designation" value="Tspan14"/>
</dbReference>
<dbReference type="VEuPathDB" id="HostDB:ENSMUSG00000037824"/>
<dbReference type="eggNOG" id="KOG3882">
    <property type="taxonomic scope" value="Eukaryota"/>
</dbReference>
<dbReference type="GeneTree" id="ENSGT00940000159235"/>
<dbReference type="HOGENOM" id="CLU_055524_0_2_1"/>
<dbReference type="InParanoid" id="Q8QZY6"/>
<dbReference type="OMA" id="QRMNHCC"/>
<dbReference type="OrthoDB" id="2014092at2759"/>
<dbReference type="PhylomeDB" id="Q8QZY6"/>
<dbReference type="TreeFam" id="TF313002"/>
<dbReference type="Reactome" id="R-MMU-6798695">
    <property type="pathway name" value="Neutrophil degranulation"/>
</dbReference>
<dbReference type="BioGRID-ORCS" id="52588">
    <property type="hits" value="3 hits in 78 CRISPR screens"/>
</dbReference>
<dbReference type="ChiTaRS" id="Tspan14">
    <property type="organism name" value="mouse"/>
</dbReference>
<dbReference type="PRO" id="PR:Q8QZY6"/>
<dbReference type="Proteomes" id="UP000000589">
    <property type="component" value="Chromosome 14"/>
</dbReference>
<dbReference type="RNAct" id="Q8QZY6">
    <property type="molecule type" value="protein"/>
</dbReference>
<dbReference type="Bgee" id="ENSMUSG00000037824">
    <property type="expression patterns" value="Expressed in placenta labyrinth and 246 other cell types or tissues"/>
</dbReference>
<dbReference type="GO" id="GO:0009986">
    <property type="term" value="C:cell surface"/>
    <property type="evidence" value="ECO:0000314"/>
    <property type="project" value="UniProtKB"/>
</dbReference>
<dbReference type="GO" id="GO:0097197">
    <property type="term" value="C:tetraspanin-enriched microdomain"/>
    <property type="evidence" value="ECO:0000314"/>
    <property type="project" value="UniProtKB"/>
</dbReference>
<dbReference type="GO" id="GO:0019899">
    <property type="term" value="F:enzyme binding"/>
    <property type="evidence" value="ECO:0000353"/>
    <property type="project" value="UniProtKB"/>
</dbReference>
<dbReference type="GO" id="GO:0045747">
    <property type="term" value="P:positive regulation of Notch signaling pathway"/>
    <property type="evidence" value="ECO:0007669"/>
    <property type="project" value="Ensembl"/>
</dbReference>
<dbReference type="GO" id="GO:0072659">
    <property type="term" value="P:protein localization to plasma membrane"/>
    <property type="evidence" value="ECO:0007669"/>
    <property type="project" value="Ensembl"/>
</dbReference>
<dbReference type="GO" id="GO:0051604">
    <property type="term" value="P:protein maturation"/>
    <property type="evidence" value="ECO:0000315"/>
    <property type="project" value="UniProtKB"/>
</dbReference>
<dbReference type="CDD" id="cd03159">
    <property type="entry name" value="TM4SF9_like_LEL"/>
    <property type="match status" value="1"/>
</dbReference>
<dbReference type="FunFam" id="1.10.1450.10:FF:000001">
    <property type="entry name" value="Tetraspanin"/>
    <property type="match status" value="1"/>
</dbReference>
<dbReference type="Gene3D" id="1.10.1450.10">
    <property type="entry name" value="Tetraspanin"/>
    <property type="match status" value="1"/>
</dbReference>
<dbReference type="InterPro" id="IPR018499">
    <property type="entry name" value="Tetraspanin/Peripherin"/>
</dbReference>
<dbReference type="InterPro" id="IPR000301">
    <property type="entry name" value="Tetraspanin_animals"/>
</dbReference>
<dbReference type="InterPro" id="IPR018503">
    <property type="entry name" value="Tetraspanin_CS"/>
</dbReference>
<dbReference type="InterPro" id="IPR008952">
    <property type="entry name" value="Tetraspanin_EC2_sf"/>
</dbReference>
<dbReference type="PANTHER" id="PTHR19282">
    <property type="entry name" value="TETRASPANIN"/>
    <property type="match status" value="1"/>
</dbReference>
<dbReference type="PANTHER" id="PTHR19282:SF261">
    <property type="entry name" value="TETRASPANIN-14"/>
    <property type="match status" value="1"/>
</dbReference>
<dbReference type="Pfam" id="PF00335">
    <property type="entry name" value="Tetraspanin"/>
    <property type="match status" value="1"/>
</dbReference>
<dbReference type="PIRSF" id="PIRSF002419">
    <property type="entry name" value="Tetraspanin"/>
    <property type="match status" value="1"/>
</dbReference>
<dbReference type="PRINTS" id="PR00259">
    <property type="entry name" value="TMFOUR"/>
</dbReference>
<dbReference type="SUPFAM" id="SSF48652">
    <property type="entry name" value="Tetraspanin"/>
    <property type="match status" value="1"/>
</dbReference>
<dbReference type="PROSITE" id="PS00421">
    <property type="entry name" value="TM4_1"/>
    <property type="match status" value="1"/>
</dbReference>
<sequence length="270" mass="30674">MHYYRYSNAEVSCWYKYLLFSYNIVFWLAGVVFLGVGLWAWSEKGVLSDLTKVTRLHGIDPVVLVLMVGVVMFTLGFAGCVGALRENICLLKFFCGAIVLIFFLELAVAVLAFLFQDWVRDRFREFFESNIKSYRDDIDLQNLIDSLQKANQCCGAYGPEDWDLNVYFNCSGASYSREKCGVPFSCCVPDPAQKVVNTQCGYDVRIQLKSKWDEFIFTKGCIQALEGWLPRNIYIVAGVFIAISLLQIFGIFLARTLISDIEAVKAGHHF</sequence>